<sequence>MSAVGRLAAVSLAQVRGALCGALLGDCMGAEFEGSDAVELPDVLEFVRLLEKEKKAGTLFYTDDTAMTRAVIQSLIAKPDFDEVDMAKRFAEEYKKEPTRGYGAGVVQVFKKLLSPKYSDVFQPAREQFDGKGSYGNGGAMRVASIALAYPNIQDVIKFARRSAQLTHASPLGYNGAILQALAVHFALQGELKRDTFLEQLIGEMERIEGGEMSASDAGEHDRPNEVKLPFCSRLKKIKEFLASSNVPKADIVDELGHGIAALESVPTAIYSFLHCMESDPDIPDLYNNLQRTIIYSISLGGDTDTIATMAGAIAGAYYGMDQVTPSWKRSCEAIVETEESAVKLYELYCKQLKTP</sequence>
<dbReference type="EC" id="3.5.1.-" evidence="1"/>
<dbReference type="EC" id="3.2.1.143" evidence="2"/>
<dbReference type="EC" id="3.2.2.-"/>
<dbReference type="EMBL" id="AFYH01014263">
    <property type="status" value="NOT_ANNOTATED_CDS"/>
    <property type="molecule type" value="Genomic_DNA"/>
</dbReference>
<dbReference type="EMBL" id="AFYH01014264">
    <property type="status" value="NOT_ANNOTATED_CDS"/>
    <property type="molecule type" value="Genomic_DNA"/>
</dbReference>
<dbReference type="RefSeq" id="XP_005988572.1">
    <property type="nucleotide sequence ID" value="XM_005988510.2"/>
</dbReference>
<dbReference type="PDB" id="6G1P">
    <property type="method" value="X-ray"/>
    <property type="resolution" value="1.55 A"/>
    <property type="chains" value="A/B=10-356"/>
</dbReference>
<dbReference type="PDB" id="6G1Q">
    <property type="method" value="X-ray"/>
    <property type="resolution" value="2.10 A"/>
    <property type="chains" value="A/B=10-356"/>
</dbReference>
<dbReference type="PDB" id="6HGZ">
    <property type="method" value="X-ray"/>
    <property type="resolution" value="1.86 A"/>
    <property type="chains" value="A/B=10-356"/>
</dbReference>
<dbReference type="PDB" id="6HH3">
    <property type="method" value="X-ray"/>
    <property type="resolution" value="1.82 A"/>
    <property type="chains" value="A/B=10-356"/>
</dbReference>
<dbReference type="PDB" id="6HH4">
    <property type="method" value="X-ray"/>
    <property type="resolution" value="1.66 A"/>
    <property type="chains" value="A/B=10-356"/>
</dbReference>
<dbReference type="PDB" id="6HH5">
    <property type="method" value="X-ray"/>
    <property type="resolution" value="1.95 A"/>
    <property type="chains" value="A/B=10-356"/>
</dbReference>
<dbReference type="PDB" id="6HOZ">
    <property type="method" value="X-ray"/>
    <property type="resolution" value="1.77 A"/>
    <property type="chains" value="A/B=10-356"/>
</dbReference>
<dbReference type="PDB" id="7AQM">
    <property type="method" value="X-ray"/>
    <property type="resolution" value="2.50 A"/>
    <property type="chains" value="A/B=10-356"/>
</dbReference>
<dbReference type="PDBsum" id="6G1P"/>
<dbReference type="PDBsum" id="6G1Q"/>
<dbReference type="PDBsum" id="6HGZ"/>
<dbReference type="PDBsum" id="6HH3"/>
<dbReference type="PDBsum" id="6HH4"/>
<dbReference type="PDBsum" id="6HH5"/>
<dbReference type="PDBsum" id="6HOZ"/>
<dbReference type="PDBsum" id="7AQM"/>
<dbReference type="SMR" id="H3BCW1"/>
<dbReference type="FunCoup" id="H3BCW1">
    <property type="interactions" value="2896"/>
</dbReference>
<dbReference type="STRING" id="7897.ENSLACP00000019731"/>
<dbReference type="Ensembl" id="ENSLACT00000019870.2">
    <property type="protein sequence ID" value="ENSLACP00000019732.2"/>
    <property type="gene ID" value="ENSLACG00000017349.2"/>
</dbReference>
<dbReference type="GeneID" id="102353686"/>
<dbReference type="KEGG" id="lcm:102353686"/>
<dbReference type="CTD" id="54936"/>
<dbReference type="GeneTree" id="ENSGT00390000015369"/>
<dbReference type="HOGENOM" id="CLU_024566_6_0_1"/>
<dbReference type="InParanoid" id="H3BCW1"/>
<dbReference type="OrthoDB" id="410104at2759"/>
<dbReference type="Proteomes" id="UP000008672">
    <property type="component" value="Unassembled WGS sequence"/>
</dbReference>
<dbReference type="Bgee" id="ENSLACG00000017349">
    <property type="expression patterns" value="Expressed in chordate pharynx and 6 other cell types or tissues"/>
</dbReference>
<dbReference type="GO" id="GO:0005694">
    <property type="term" value="C:chromosome"/>
    <property type="evidence" value="ECO:0007669"/>
    <property type="project" value="UniProtKB-SubCell"/>
</dbReference>
<dbReference type="GO" id="GO:0005759">
    <property type="term" value="C:mitochondrial matrix"/>
    <property type="evidence" value="ECO:0007669"/>
    <property type="project" value="UniProtKB-SubCell"/>
</dbReference>
<dbReference type="GO" id="GO:0005634">
    <property type="term" value="C:nucleus"/>
    <property type="evidence" value="ECO:0007669"/>
    <property type="project" value="UniProtKB-SubCell"/>
</dbReference>
<dbReference type="GO" id="GO:0140292">
    <property type="term" value="F:ADP-ribosylserine hydrolase activity"/>
    <property type="evidence" value="ECO:0007669"/>
    <property type="project" value="RHEA"/>
</dbReference>
<dbReference type="GO" id="GO:0000287">
    <property type="term" value="F:magnesium ion binding"/>
    <property type="evidence" value="ECO:0000314"/>
    <property type="project" value="UniProtKB"/>
</dbReference>
<dbReference type="GO" id="GO:0004649">
    <property type="term" value="F:poly(ADP-ribose) glycohydrolase activity"/>
    <property type="evidence" value="ECO:0000314"/>
    <property type="project" value="UniProtKB"/>
</dbReference>
<dbReference type="GO" id="GO:0006281">
    <property type="term" value="P:DNA repair"/>
    <property type="evidence" value="ECO:0007669"/>
    <property type="project" value="UniProtKB-KW"/>
</dbReference>
<dbReference type="GO" id="GO:0060546">
    <property type="term" value="P:negative regulation of necroptotic process"/>
    <property type="evidence" value="ECO:0000250"/>
    <property type="project" value="UniProtKB"/>
</dbReference>
<dbReference type="GO" id="GO:0140290">
    <property type="term" value="P:peptidyl-serine ADP-deribosylation"/>
    <property type="evidence" value="ECO:0000314"/>
    <property type="project" value="UniProtKB"/>
</dbReference>
<dbReference type="FunFam" id="1.10.4080.10:FF:000001">
    <property type="entry name" value="ADP-ribose glycohydrolase ARH3"/>
    <property type="match status" value="1"/>
</dbReference>
<dbReference type="Gene3D" id="1.10.4080.10">
    <property type="entry name" value="ADP-ribosylation/Crystallin J1"/>
    <property type="match status" value="1"/>
</dbReference>
<dbReference type="InterPro" id="IPR050792">
    <property type="entry name" value="ADP-ribosylglycohydrolase"/>
</dbReference>
<dbReference type="InterPro" id="IPR005502">
    <property type="entry name" value="Ribosyl_crysJ1"/>
</dbReference>
<dbReference type="InterPro" id="IPR036705">
    <property type="entry name" value="Ribosyl_crysJ1_sf"/>
</dbReference>
<dbReference type="PANTHER" id="PTHR16222">
    <property type="entry name" value="ADP-RIBOSYLGLYCOHYDROLASE"/>
    <property type="match status" value="1"/>
</dbReference>
<dbReference type="PANTHER" id="PTHR16222:SF24">
    <property type="entry name" value="ADP-RIBOSYLHYDROLASE ARH3"/>
    <property type="match status" value="1"/>
</dbReference>
<dbReference type="Pfam" id="PF03747">
    <property type="entry name" value="ADP_ribosyl_GH"/>
    <property type="match status" value="1"/>
</dbReference>
<dbReference type="SUPFAM" id="SSF101478">
    <property type="entry name" value="ADP-ribosylglycohydrolase"/>
    <property type="match status" value="1"/>
</dbReference>
<evidence type="ECO:0000250" key="1">
    <source>
        <dbReference type="UniProtKB" id="Q9NX46"/>
    </source>
</evidence>
<evidence type="ECO:0000269" key="2">
    <source>
    </source>
</evidence>
<evidence type="ECO:0000269" key="3">
    <source>
    </source>
</evidence>
<evidence type="ECO:0000303" key="4">
    <source>
    </source>
</evidence>
<evidence type="ECO:0000305" key="5"/>
<evidence type="ECO:0000305" key="6">
    <source>
    </source>
</evidence>
<evidence type="ECO:0007744" key="7">
    <source>
        <dbReference type="PDB" id="7AQM"/>
    </source>
</evidence>
<evidence type="ECO:0007829" key="8">
    <source>
        <dbReference type="PDB" id="6G1P"/>
    </source>
</evidence>
<evidence type="ECO:0007829" key="9">
    <source>
        <dbReference type="PDB" id="6HH4"/>
    </source>
</evidence>
<evidence type="ECO:0007829" key="10">
    <source>
        <dbReference type="PDB" id="6HH5"/>
    </source>
</evidence>
<gene>
    <name type="primary">adprs</name>
    <name type="synonym">adprhl2</name>
    <name evidence="4" type="synonym">arh3</name>
</gene>
<comment type="function">
    <text evidence="1 2">ADP-ribosylhydrolase that preferentially hydrolyzes the scissile alpha-O-linkage attached to the anomeric C1'' position of ADP-ribose and acts on different substrates, such as proteins ADP-ribosylated on serine and threonine, free poly(ADP-ribose) and O-acetyl-ADP-D-ribose (PubMed:30472116). Specifically acts as a serine mono-ADP-ribosylhydrolase by mediating the removal of mono-ADP-ribose attached to serine residues on proteins, thereby playing a key role in DNA damage response (PubMed:30472116). Serine ADP-ribosylation of proteins constitutes the primary form of ADP-ribosylation of proteins in response to DNA damage (By similarity). Does not hydrolyze ADP-ribosyl-arginine, -cysteine, -diphthamide, or -asparagine bonds (By similarity). Also able to degrade protein free poly(ADP-ribose), which is synthesized in response to DNA damage: free poly(ADP-ribose) acts as a potent cell death signal and its degradation by ADPRHL2 protects cells from poly(ADP-ribose)-dependent cell death, a process named parthanatos (PubMed:30472116). Also hydrolyzes free poly(ADP-ribose) in mitochondria (By similarity). Specifically digests O-acetyl-ADP-D-ribose, a product of deacetylation reactions catalyzed by sirtuins (By similarity). Specifically degrades 1''-O-acetyl-ADP-D-ribose isomer, rather than 2''-O-acetyl-ADP-D-ribose or 3''-O-acetyl-ADP-D-ribose isomers (By similarity).</text>
</comment>
<comment type="catalytic activity">
    <reaction evidence="2">
        <text>[(1''-&gt;2')-ADP-alpha-D-ribose](n) + H2O = [(1''-&gt;2')-ADP-alpha-D-ribose](n-1) + ADP-D-ribose</text>
        <dbReference type="Rhea" id="RHEA:52216"/>
        <dbReference type="Rhea" id="RHEA-COMP:16922"/>
        <dbReference type="Rhea" id="RHEA-COMP:16923"/>
        <dbReference type="ChEBI" id="CHEBI:15377"/>
        <dbReference type="ChEBI" id="CHEBI:57967"/>
        <dbReference type="ChEBI" id="CHEBI:142512"/>
        <dbReference type="EC" id="3.2.1.143"/>
    </reaction>
    <physiologicalReaction direction="left-to-right" evidence="2">
        <dbReference type="Rhea" id="RHEA:52217"/>
    </physiologicalReaction>
</comment>
<comment type="catalytic activity">
    <reaction evidence="1">
        <text>1''-O-acetyl-ADP-alpha-D-ribose + H2O = ADP-D-ribose + acetate + H(+)</text>
        <dbReference type="Rhea" id="RHEA:58112"/>
        <dbReference type="ChEBI" id="CHEBI:15377"/>
        <dbReference type="ChEBI" id="CHEBI:15378"/>
        <dbReference type="ChEBI" id="CHEBI:30089"/>
        <dbReference type="ChEBI" id="CHEBI:57967"/>
        <dbReference type="ChEBI" id="CHEBI:142511"/>
    </reaction>
</comment>
<comment type="catalytic activity">
    <reaction evidence="2">
        <text>O-(ADP-D-ribosyl)-L-seryl-[protein] + H2O = ADP-D-ribose + L-seryl-[protein]</text>
        <dbReference type="Rhea" id="RHEA:58256"/>
        <dbReference type="Rhea" id="RHEA-COMP:9863"/>
        <dbReference type="Rhea" id="RHEA-COMP:15091"/>
        <dbReference type="ChEBI" id="CHEBI:15377"/>
        <dbReference type="ChEBI" id="CHEBI:29999"/>
        <dbReference type="ChEBI" id="CHEBI:57967"/>
        <dbReference type="ChEBI" id="CHEBI:142556"/>
    </reaction>
</comment>
<comment type="catalytic activity">
    <reaction evidence="1">
        <text>alpha-NAD(+) + H2O = ADP-D-ribose + nicotinamide + H(+)</text>
        <dbReference type="Rhea" id="RHEA:68792"/>
        <dbReference type="ChEBI" id="CHEBI:15377"/>
        <dbReference type="ChEBI" id="CHEBI:15378"/>
        <dbReference type="ChEBI" id="CHEBI:17154"/>
        <dbReference type="ChEBI" id="CHEBI:57967"/>
        <dbReference type="ChEBI" id="CHEBI:77017"/>
    </reaction>
</comment>
<comment type="cofactor">
    <cofactor evidence="2">
        <name>Mg(2+)</name>
        <dbReference type="ChEBI" id="CHEBI:18420"/>
    </cofactor>
    <cofactor evidence="6">
        <name>Mn(2+)</name>
        <dbReference type="ChEBI" id="CHEBI:29035"/>
    </cofactor>
    <text evidence="2">Binds 2 magnesium ions per subunit.</text>
</comment>
<comment type="activity regulation">
    <text evidence="1 2">The protein undergoes a dramatic conformational switch from closed to open states upon substrate-binding, which enables specific substrate recognition for the 1''-O-linkage (By similarity). The glutamate flap (Glu-33) blocks substrate entrance to Mg(2+) in the unliganded closed state (By similarity). In presence of substrate, Glu-33 is ejected from the active site: this closed-to-open transition significantly widens the substrate-binding channel and precisely positions the scissile 1''-O-linkage for cleavage while securing tightly 2'- and 3'-hydroxyls of ADP-ribose (By similarity). Activity is inhibited by calcium (PubMed:30472116).</text>
</comment>
<comment type="subunit">
    <text evidence="1">Monomer.</text>
</comment>
<comment type="subcellular location">
    <subcellularLocation>
        <location evidence="1">Nucleus</location>
    </subcellularLocation>
    <subcellularLocation>
        <location evidence="1">Cytoplasm</location>
    </subcellularLocation>
    <subcellularLocation>
        <location evidence="1">Chromosome</location>
    </subcellularLocation>
    <subcellularLocation>
        <location evidence="1">Mitochondrion matrix</location>
    </subcellularLocation>
    <text evidence="1">Recruited to DNA lesion regions following DNA damage; ADP-D-ribose-recognition is required for recruitment to DNA damage sites.</text>
</comment>
<comment type="similarity">
    <text evidence="5">Belongs to the ADP-ribosylglycohydrolase family.</text>
</comment>
<proteinExistence type="evidence at protein level"/>
<keyword id="KW-0002">3D-structure</keyword>
<keyword id="KW-0158">Chromosome</keyword>
<keyword id="KW-0963">Cytoplasm</keyword>
<keyword id="KW-0227">DNA damage</keyword>
<keyword id="KW-0234">DNA repair</keyword>
<keyword id="KW-0378">Hydrolase</keyword>
<keyword id="KW-0460">Magnesium</keyword>
<keyword id="KW-0479">Metal-binding</keyword>
<keyword id="KW-0496">Mitochondrion</keyword>
<keyword id="KW-0539">Nucleus</keyword>
<keyword id="KW-1185">Reference proteome</keyword>
<feature type="chain" id="PRO_5003580722" description="ADP-ribosylhydrolase ARH3">
    <location>
        <begin position="1"/>
        <end position="356"/>
    </location>
</feature>
<feature type="binding site" evidence="3 7">
    <location>
        <position position="26"/>
    </location>
    <ligand>
        <name>Mg(2+)</name>
        <dbReference type="ChEBI" id="CHEBI:18420"/>
        <label>1</label>
    </ligand>
</feature>
<feature type="binding site" evidence="2 3 7">
    <location>
        <position position="33"/>
    </location>
    <ligand>
        <name>Mg(2+)</name>
        <dbReference type="ChEBI" id="CHEBI:18420"/>
        <label>2</label>
    </ligand>
</feature>
<feature type="binding site" evidence="2">
    <location>
        <position position="62"/>
    </location>
    <ligand>
        <name>Mg(2+)</name>
        <dbReference type="ChEBI" id="CHEBI:18420"/>
        <label>1</label>
    </ligand>
</feature>
<feature type="binding site" evidence="2 3 7">
    <location>
        <position position="63"/>
    </location>
    <ligand>
        <name>Mg(2+)</name>
        <dbReference type="ChEBI" id="CHEBI:18420"/>
        <label>1</label>
    </ligand>
</feature>
<feature type="binding site" evidence="2">
    <location>
        <position position="63"/>
    </location>
    <ligand>
        <name>substrate</name>
    </ligand>
</feature>
<feature type="binding site" evidence="2 3 7">
    <location>
        <position position="64"/>
    </location>
    <ligand>
        <name>Mg(2+)</name>
        <dbReference type="ChEBI" id="CHEBI:18420"/>
        <label>1</label>
    </ligand>
</feature>
<feature type="binding site" evidence="2">
    <location>
        <begin position="132"/>
        <end position="138"/>
    </location>
    <ligand>
        <name>substrate</name>
    </ligand>
</feature>
<feature type="binding site" evidence="2">
    <location>
        <position position="168"/>
    </location>
    <ligand>
        <name>substrate</name>
    </ligand>
</feature>
<feature type="binding site" evidence="2">
    <location>
        <position position="260"/>
    </location>
    <ligand>
        <name>substrate</name>
    </ligand>
</feature>
<feature type="binding site" evidence="2 3 7">
    <location>
        <position position="303"/>
    </location>
    <ligand>
        <name>Mg(2+)</name>
        <dbReference type="ChEBI" id="CHEBI:18420"/>
        <label>2</label>
    </ligand>
</feature>
<feature type="binding site" evidence="2 3 7">
    <location>
        <position position="305"/>
    </location>
    <ligand>
        <name>Mg(2+)</name>
        <dbReference type="ChEBI" id="CHEBI:18420"/>
        <label>1</label>
    </ligand>
</feature>
<feature type="binding site" evidence="2 3 7">
    <location>
        <position position="305"/>
    </location>
    <ligand>
        <name>Mg(2+)</name>
        <dbReference type="ChEBI" id="CHEBI:18420"/>
        <label>2</label>
    </ligand>
</feature>
<feature type="binding site" evidence="2">
    <location>
        <position position="306"/>
    </location>
    <ligand>
        <name>Mg(2+)</name>
        <dbReference type="ChEBI" id="CHEBI:18420"/>
        <label>2</label>
    </ligand>
</feature>
<feature type="site" description="Glutamate flap" evidence="1">
    <location>
        <position position="33"/>
    </location>
</feature>
<feature type="mutagenesis site" description="Complete loss of activity." evidence="2">
    <original>E</original>
    <variation>Q</variation>
    <location>
        <position position="33"/>
    </location>
</feature>
<feature type="mutagenesis site" description="Complete loss of activity." evidence="2">
    <original>D</original>
    <variation>N</variation>
    <location>
        <position position="63"/>
    </location>
</feature>
<feature type="mutagenesis site" description="Complete loss of activity." evidence="2">
    <original>D</original>
    <variation>N</variation>
    <location>
        <position position="64"/>
    </location>
</feature>
<feature type="mutagenesis site" description="Complete loss of activity." evidence="2">
    <original>D</original>
    <variation>N</variation>
    <location>
        <position position="303"/>
    </location>
</feature>
<feature type="mutagenesis site" description="Complete loss of activity." evidence="2">
    <original>D</original>
    <variation>N</variation>
    <location>
        <position position="305"/>
    </location>
</feature>
<feature type="helix" evidence="8">
    <location>
        <begin position="12"/>
        <end position="29"/>
    </location>
</feature>
<feature type="helix" evidence="8">
    <location>
        <begin position="30"/>
        <end position="32"/>
    </location>
</feature>
<feature type="helix" evidence="8">
    <location>
        <begin position="40"/>
        <end position="52"/>
    </location>
</feature>
<feature type="strand" evidence="8">
    <location>
        <begin position="54"/>
        <end position="56"/>
    </location>
</feature>
<feature type="helix" evidence="8">
    <location>
        <begin position="63"/>
        <end position="77"/>
    </location>
</feature>
<feature type="helix" evidence="8">
    <location>
        <begin position="83"/>
        <end position="96"/>
    </location>
</feature>
<feature type="helix" evidence="8">
    <location>
        <begin position="106"/>
        <end position="114"/>
    </location>
</feature>
<feature type="strand" evidence="9">
    <location>
        <begin position="115"/>
        <end position="117"/>
    </location>
</feature>
<feature type="helix" evidence="8">
    <location>
        <begin position="123"/>
        <end position="131"/>
    </location>
</feature>
<feature type="helix" evidence="8">
    <location>
        <begin position="138"/>
        <end position="141"/>
    </location>
</feature>
<feature type="helix" evidence="8">
    <location>
        <begin position="144"/>
        <end position="149"/>
    </location>
</feature>
<feature type="helix" evidence="8">
    <location>
        <begin position="153"/>
        <end position="165"/>
    </location>
</feature>
<feature type="helix" evidence="8">
    <location>
        <begin position="171"/>
        <end position="187"/>
    </location>
</feature>
<feature type="strand" evidence="10">
    <location>
        <begin position="189"/>
        <end position="191"/>
    </location>
</feature>
<feature type="helix" evidence="8">
    <location>
        <begin position="194"/>
        <end position="209"/>
    </location>
</feature>
<feature type="helix" evidence="8">
    <location>
        <begin position="230"/>
        <end position="243"/>
    </location>
</feature>
<feature type="strand" evidence="8">
    <location>
        <begin position="244"/>
        <end position="246"/>
    </location>
</feature>
<feature type="helix" evidence="8">
    <location>
        <begin position="249"/>
        <end position="255"/>
    </location>
</feature>
<feature type="strand" evidence="8">
    <location>
        <begin position="259"/>
        <end position="261"/>
    </location>
</feature>
<feature type="helix" evidence="8">
    <location>
        <begin position="262"/>
        <end position="264"/>
    </location>
</feature>
<feature type="helix" evidence="8">
    <location>
        <begin position="266"/>
        <end position="275"/>
    </location>
</feature>
<feature type="helix" evidence="8">
    <location>
        <begin position="289"/>
        <end position="299"/>
    </location>
</feature>
<feature type="helix" evidence="8">
    <location>
        <begin position="304"/>
        <end position="319"/>
    </location>
</feature>
<feature type="helix" evidence="8">
    <location>
        <begin position="321"/>
        <end position="323"/>
    </location>
</feature>
<feature type="helix" evidence="8">
    <location>
        <begin position="326"/>
        <end position="329"/>
    </location>
</feature>
<feature type="helix" evidence="8">
    <location>
        <begin position="335"/>
        <end position="352"/>
    </location>
</feature>
<reference key="1">
    <citation type="journal article" date="1997" name="Genetics">
        <title>The complete DNA sequence of the mitochondrial genome of a 'living fossil,' the coelacanth (Latimeria chalumnae).</title>
        <authorList>
            <person name="Zardoya R."/>
            <person name="Meyer A."/>
        </authorList>
    </citation>
    <scope>NUCLEOTIDE SEQUENCE [LARGE SCALE GENOMIC DNA]</scope>
</reference>
<reference key="2">
    <citation type="journal article" date="2018" name="Cell Chem. Biol.">
        <title>(ADP-ribosyl)hydrolases: Structural Basis for Differential Substrate Recognition and Inhibition.</title>
        <authorList>
            <person name="Rack J.G.M."/>
            <person name="Ariza A."/>
            <person name="Drown B.S."/>
            <person name="Henfrey C."/>
            <person name="Bartlett E."/>
            <person name="Shirai T."/>
            <person name="Hergenrother P.J."/>
            <person name="Ahel I."/>
        </authorList>
    </citation>
    <scope>X-RAY CRYSTALLOGRAPHY (1.55 ANGSTROMS) OF 10-356 IN COMPLEX WITH MAGNESIUM AND ADP-RIBOSE</scope>
    <scope>FUNCTION</scope>
    <scope>CATALYTIC ACTIVITY</scope>
    <scope>COFACTOR</scope>
    <scope>ACTIVITY REGULATION</scope>
    <scope>MUTAGENESIS OF GLU-33; ASP-63; ASP-64; ASP-303 AND ASP-305</scope>
</reference>
<reference evidence="7" key="3">
    <citation type="journal article" date="2021" name="Nat. Commun.">
        <title>Mechanistic insights into the three steps of poly(ADP-ribosylation) reversal.</title>
        <authorList>
            <person name="Rack J.G.M."/>
            <person name="Liu Q."/>
            <person name="Zorzini V."/>
            <person name="Voorneveld J."/>
            <person name="Ariza A."/>
            <person name="Honarmand Ebrahimi K."/>
            <person name="Reber J.M."/>
            <person name="Krassnig S.C."/>
            <person name="Ahel D."/>
            <person name="van der Marel G.A."/>
            <person name="Mangerich A."/>
            <person name="McCullagh J.S.O."/>
            <person name="Filippov D.V."/>
            <person name="Ahel I."/>
        </authorList>
    </citation>
    <scope>X-RAY CRYSTALLOGRAPHY (2.6 ANGSTROMS) OF 10-356 IN COMPLEX WITH METHYL-ADP-RIBOSE</scope>
</reference>
<accession>H3BCW1</accession>
<name>ADPRS_LATCH</name>
<organism>
    <name type="scientific">Latimeria chalumnae</name>
    <name type="common">Coelacanth</name>
    <dbReference type="NCBI Taxonomy" id="7897"/>
    <lineage>
        <taxon>Eukaryota</taxon>
        <taxon>Metazoa</taxon>
        <taxon>Chordata</taxon>
        <taxon>Craniata</taxon>
        <taxon>Vertebrata</taxon>
        <taxon>Euteleostomi</taxon>
        <taxon>Coelacanthiformes</taxon>
        <taxon>Coelacanthidae</taxon>
        <taxon>Latimeria</taxon>
    </lineage>
</organism>
<protein>
    <recommendedName>
        <fullName evidence="5">ADP-ribosylhydrolase ARH3</fullName>
    </recommendedName>
    <alternativeName>
        <fullName evidence="5">ADP-ribose glycohydrolase ARH3</fullName>
        <shortName evidence="4">LchARH3</shortName>
    </alternativeName>
    <alternativeName>
        <fullName evidence="1">ADP-ribosylhydrolase 3</fullName>
    </alternativeName>
    <alternativeName>
        <fullName evidence="5">O-acetyl-ADP-ribose deacetylase ARH3</fullName>
        <ecNumber evidence="1">3.5.1.-</ecNumber>
    </alternativeName>
    <alternativeName>
        <fullName evidence="5">Poly(ADP-ribose) glycohydrolase ARH3</fullName>
        <ecNumber evidence="2">3.2.1.143</ecNumber>
    </alternativeName>
    <alternativeName>
        <fullName evidence="5">[Protein ADP-ribosylarginine] hydrolase-like protein 2</fullName>
    </alternativeName>
    <alternativeName>
        <fullName>[Protein ADP-ribosylserine] hydrolase</fullName>
        <ecNumber>3.2.2.-</ecNumber>
    </alternativeName>
</protein>